<name>ECOT_YERPB</name>
<comment type="function">
    <text evidence="1">General inhibitor of pancreatic serine proteases: inhibits chymotrypsin, trypsin, elastases, factor X, kallikrein as well as a variety of other proteases.</text>
</comment>
<comment type="subunit">
    <text evidence="1">Homodimer.</text>
</comment>
<comment type="subcellular location">
    <subcellularLocation>
        <location evidence="1">Periplasm</location>
    </subcellularLocation>
</comment>
<comment type="similarity">
    <text evidence="1">Belongs to the protease inhibitor I11 (ecotin) family.</text>
</comment>
<feature type="signal peptide" evidence="1">
    <location>
        <begin position="1"/>
        <end position="21"/>
    </location>
</feature>
<feature type="chain" id="PRO_5000345931" description="Ecotin">
    <location>
        <begin position="22"/>
        <end position="169"/>
    </location>
</feature>
<feature type="site" description="Reactive bond" evidence="1">
    <location>
        <begin position="110"/>
        <end position="111"/>
    </location>
</feature>
<feature type="disulfide bond" evidence="1">
    <location>
        <begin position="76"/>
        <end position="113"/>
    </location>
</feature>
<accession>B2K9A0</accession>
<sequence length="169" mass="18871">MKKCSIILASVLLATSINAIADTPTPLNQQQPLEKIAPYPQAEKGMSRQVIFLEPQKDESRFKVELLIGKTLNVDCNRHMLGGNLETRTLSGWGFDYLVMDKISQPASTMMACPEDSKPQVKFVTANLGDAAMQRYNSRLPIVVYVPQGVEVKYRIWEAGEDIRSAQVK</sequence>
<protein>
    <recommendedName>
        <fullName evidence="1">Ecotin</fullName>
    </recommendedName>
</protein>
<reference key="1">
    <citation type="submission" date="2008-04" db="EMBL/GenBank/DDBJ databases">
        <title>Complete sequence of Yersinia pseudotuberculosis PB1/+.</title>
        <authorList>
            <person name="Copeland A."/>
            <person name="Lucas S."/>
            <person name="Lapidus A."/>
            <person name="Glavina del Rio T."/>
            <person name="Dalin E."/>
            <person name="Tice H."/>
            <person name="Bruce D."/>
            <person name="Goodwin L."/>
            <person name="Pitluck S."/>
            <person name="Munk A.C."/>
            <person name="Brettin T."/>
            <person name="Detter J.C."/>
            <person name="Han C."/>
            <person name="Tapia R."/>
            <person name="Schmutz J."/>
            <person name="Larimer F."/>
            <person name="Land M."/>
            <person name="Hauser L."/>
            <person name="Challacombe J.F."/>
            <person name="Green L."/>
            <person name="Lindler L.E."/>
            <person name="Nikolich M.P."/>
            <person name="Richardson P."/>
        </authorList>
    </citation>
    <scope>NUCLEOTIDE SEQUENCE [LARGE SCALE GENOMIC DNA]</scope>
    <source>
        <strain>PB1/+</strain>
    </source>
</reference>
<gene>
    <name evidence="1" type="primary">eco</name>
    <name type="ordered locus">YPTS_1338</name>
</gene>
<evidence type="ECO:0000255" key="1">
    <source>
        <dbReference type="HAMAP-Rule" id="MF_00706"/>
    </source>
</evidence>
<organism>
    <name type="scientific">Yersinia pseudotuberculosis serotype IB (strain PB1/+)</name>
    <dbReference type="NCBI Taxonomy" id="502801"/>
    <lineage>
        <taxon>Bacteria</taxon>
        <taxon>Pseudomonadati</taxon>
        <taxon>Pseudomonadota</taxon>
        <taxon>Gammaproteobacteria</taxon>
        <taxon>Enterobacterales</taxon>
        <taxon>Yersiniaceae</taxon>
        <taxon>Yersinia</taxon>
    </lineage>
</organism>
<keyword id="KW-1015">Disulfide bond</keyword>
<keyword id="KW-0574">Periplasm</keyword>
<keyword id="KW-0646">Protease inhibitor</keyword>
<keyword id="KW-0722">Serine protease inhibitor</keyword>
<keyword id="KW-0732">Signal</keyword>
<proteinExistence type="inferred from homology"/>
<dbReference type="EMBL" id="CP001048">
    <property type="protein sequence ID" value="ACC88313.1"/>
    <property type="molecule type" value="Genomic_DNA"/>
</dbReference>
<dbReference type="RefSeq" id="WP_002210815.1">
    <property type="nucleotide sequence ID" value="NZ_CP009780.1"/>
</dbReference>
<dbReference type="SMR" id="B2K9A0"/>
<dbReference type="MEROPS" id="I11.001"/>
<dbReference type="GeneID" id="57977350"/>
<dbReference type="KEGG" id="ypb:YPTS_1338"/>
<dbReference type="PATRIC" id="fig|502801.10.peg.691"/>
<dbReference type="GO" id="GO:0042597">
    <property type="term" value="C:periplasmic space"/>
    <property type="evidence" value="ECO:0007669"/>
    <property type="project" value="UniProtKB-SubCell"/>
</dbReference>
<dbReference type="GO" id="GO:0004867">
    <property type="term" value="F:serine-type endopeptidase inhibitor activity"/>
    <property type="evidence" value="ECO:0007669"/>
    <property type="project" value="UniProtKB-UniRule"/>
</dbReference>
<dbReference type="CDD" id="cd00242">
    <property type="entry name" value="Ecotin"/>
    <property type="match status" value="1"/>
</dbReference>
<dbReference type="Gene3D" id="2.60.40.550">
    <property type="entry name" value="Ecotin"/>
    <property type="match status" value="1"/>
</dbReference>
<dbReference type="HAMAP" id="MF_00706">
    <property type="entry name" value="Ecotin"/>
    <property type="match status" value="1"/>
</dbReference>
<dbReference type="InterPro" id="IPR036198">
    <property type="entry name" value="Ecotin_sf"/>
</dbReference>
<dbReference type="InterPro" id="IPR005658">
    <property type="entry name" value="Prot_inh_ecotin"/>
</dbReference>
<dbReference type="InterPro" id="IPR023084">
    <property type="entry name" value="Prot_inh_ecotin_gammaproteobac"/>
</dbReference>
<dbReference type="NCBIfam" id="NF002987">
    <property type="entry name" value="PRK03719.1"/>
    <property type="match status" value="1"/>
</dbReference>
<dbReference type="PANTHER" id="PTHR35890">
    <property type="match status" value="1"/>
</dbReference>
<dbReference type="PANTHER" id="PTHR35890:SF3">
    <property type="entry name" value="ECOTIN"/>
    <property type="match status" value="1"/>
</dbReference>
<dbReference type="Pfam" id="PF03974">
    <property type="entry name" value="Ecotin"/>
    <property type="match status" value="1"/>
</dbReference>
<dbReference type="PIRSF" id="PIRSF006865">
    <property type="entry name" value="Prot_inh_ecotin"/>
    <property type="match status" value="1"/>
</dbReference>
<dbReference type="SUPFAM" id="SSF49772">
    <property type="entry name" value="Ecotin, trypsin inhibitor"/>
    <property type="match status" value="1"/>
</dbReference>